<feature type="chain" id="PRO_0000408067" description="Antitoxin VapB21">
    <location>
        <begin position="1"/>
        <end position="88"/>
    </location>
</feature>
<gene>
    <name type="primary">vapB21</name>
    <name type="ordered locus">Rv2758c</name>
</gene>
<proteinExistence type="evidence at protein level"/>
<organism>
    <name type="scientific">Mycobacterium tuberculosis (strain ATCC 25618 / H37Rv)</name>
    <dbReference type="NCBI Taxonomy" id="83332"/>
    <lineage>
        <taxon>Bacteria</taxon>
        <taxon>Bacillati</taxon>
        <taxon>Actinomycetota</taxon>
        <taxon>Actinomycetes</taxon>
        <taxon>Mycobacteriales</taxon>
        <taxon>Mycobacteriaceae</taxon>
        <taxon>Mycobacterium</taxon>
        <taxon>Mycobacterium tuberculosis complex</taxon>
    </lineage>
</organism>
<reference key="1">
    <citation type="journal article" date="1998" name="Nature">
        <title>Deciphering the biology of Mycobacterium tuberculosis from the complete genome sequence.</title>
        <authorList>
            <person name="Cole S.T."/>
            <person name="Brosch R."/>
            <person name="Parkhill J."/>
            <person name="Garnier T."/>
            <person name="Churcher C.M."/>
            <person name="Harris D.E."/>
            <person name="Gordon S.V."/>
            <person name="Eiglmeier K."/>
            <person name="Gas S."/>
            <person name="Barry C.E. III"/>
            <person name="Tekaia F."/>
            <person name="Badcock K."/>
            <person name="Basham D."/>
            <person name="Brown D."/>
            <person name="Chillingworth T."/>
            <person name="Connor R."/>
            <person name="Davies R.M."/>
            <person name="Devlin K."/>
            <person name="Feltwell T."/>
            <person name="Gentles S."/>
            <person name="Hamlin N."/>
            <person name="Holroyd S."/>
            <person name="Hornsby T."/>
            <person name="Jagels K."/>
            <person name="Krogh A."/>
            <person name="McLean J."/>
            <person name="Moule S."/>
            <person name="Murphy L.D."/>
            <person name="Oliver S."/>
            <person name="Osborne J."/>
            <person name="Quail M.A."/>
            <person name="Rajandream M.A."/>
            <person name="Rogers J."/>
            <person name="Rutter S."/>
            <person name="Seeger K."/>
            <person name="Skelton S."/>
            <person name="Squares S."/>
            <person name="Squares R."/>
            <person name="Sulston J.E."/>
            <person name="Taylor K."/>
            <person name="Whitehead S."/>
            <person name="Barrell B.G."/>
        </authorList>
    </citation>
    <scope>NUCLEOTIDE SEQUENCE [LARGE SCALE GENOMIC DNA]</scope>
    <source>
        <strain>ATCC 25618 / H37Rv</strain>
    </source>
</reference>
<reference key="2">
    <citation type="journal article" date="2005" name="Nucleic Acids Res.">
        <title>Toxin-antitoxin loci are highly abundant in free-living but lost from host-associated prokaryotes.</title>
        <authorList>
            <person name="Pandey D.P."/>
            <person name="Gerdes K."/>
        </authorList>
    </citation>
    <scope>POSSIBLE FUNCTION</scope>
    <source>
        <strain>ATCC 25618 / H37Rv</strain>
    </source>
</reference>
<reference key="3">
    <citation type="journal article" date="2009" name="PLoS Genet.">
        <title>Comprehensive functional analysis of Mycobacterium tuberculosis toxin-antitoxin systems: implications for pathogenesis, stress responses, and evolution.</title>
        <authorList>
            <person name="Ramage H.R."/>
            <person name="Connolly L.E."/>
            <person name="Cox J.S."/>
        </authorList>
    </citation>
    <scope>EXPRESSION IN M.SMEGMATIS</scope>
    <scope>FUNCTION AS AN ANTITOXIN</scope>
    <source>
        <strain>ATCC 35801 / TMC 107 / Erdman</strain>
    </source>
</reference>
<evidence type="ECO:0000269" key="1">
    <source>
    </source>
</evidence>
<evidence type="ECO:0000305" key="2">
    <source>
    </source>
</evidence>
<keyword id="KW-1185">Reference proteome</keyword>
<keyword id="KW-1277">Toxin-antitoxin system</keyword>
<protein>
    <recommendedName>
        <fullName>Antitoxin VapB21</fullName>
    </recommendedName>
</protein>
<comment type="function">
    <text evidence="1 2">Antitoxin component of a type II toxin-antitoxin (TA) system. Upon expression in M.smegmatis neutralizes the effect of cognate toxin VapC21.</text>
</comment>
<accession>P9WJ43</accession>
<accession>L0TDH0</accession>
<accession>O33300</accession>
<accession>Q7D6M8</accession>
<name>VPB21_MYCTU</name>
<dbReference type="EMBL" id="AL123456">
    <property type="protein sequence ID" value="CCP45557.1"/>
    <property type="molecule type" value="Genomic_DNA"/>
</dbReference>
<dbReference type="PIR" id="E70880">
    <property type="entry name" value="E70880"/>
</dbReference>
<dbReference type="RefSeq" id="NP_217274.1">
    <property type="nucleotide sequence ID" value="NC_000962.3"/>
</dbReference>
<dbReference type="RefSeq" id="WP_003414061.1">
    <property type="nucleotide sequence ID" value="NZ_NVQJ01000020.1"/>
</dbReference>
<dbReference type="SMR" id="P9WJ43"/>
<dbReference type="STRING" id="83332.Rv2758c"/>
<dbReference type="PaxDb" id="83332-Rv2758c"/>
<dbReference type="DNASU" id="888263"/>
<dbReference type="GeneID" id="888263"/>
<dbReference type="KEGG" id="mtu:Rv2758c"/>
<dbReference type="KEGG" id="mtv:RVBD_2758c"/>
<dbReference type="PATRIC" id="fig|83332.111.peg.3069"/>
<dbReference type="TubercuList" id="Rv2758c"/>
<dbReference type="eggNOG" id="COG5450">
    <property type="taxonomic scope" value="Bacteria"/>
</dbReference>
<dbReference type="InParanoid" id="P9WJ43"/>
<dbReference type="OrthoDB" id="4563074at2"/>
<dbReference type="Proteomes" id="UP000001584">
    <property type="component" value="Chromosome"/>
</dbReference>
<dbReference type="GO" id="GO:0045927">
    <property type="term" value="P:positive regulation of growth"/>
    <property type="evidence" value="ECO:0000315"/>
    <property type="project" value="MTBBASE"/>
</dbReference>
<dbReference type="InterPro" id="IPR019239">
    <property type="entry name" value="VapB_antitoxin"/>
</dbReference>
<dbReference type="Pfam" id="PF09957">
    <property type="entry name" value="VapB_antitoxin"/>
    <property type="match status" value="1"/>
</dbReference>
<sequence>MHRGYALVVCSPGVTRTMIDIDDDLLARAAKELGTTTKKDTVHAALRAALRASAARSLMNRMAENATGTQDEALVNAMWRDGHPENTA</sequence>